<gene>
    <name type="ordered locus">MW0687</name>
</gene>
<dbReference type="EC" id="3.1.3.-"/>
<dbReference type="EMBL" id="BA000033">
    <property type="protein sequence ID" value="BAB94552.1"/>
    <property type="molecule type" value="Genomic_DNA"/>
</dbReference>
<dbReference type="RefSeq" id="WP_000197271.1">
    <property type="nucleotide sequence ID" value="NC_003923.1"/>
</dbReference>
<dbReference type="SMR" id="Q8NXN2"/>
<dbReference type="KEGG" id="sam:MW0687"/>
<dbReference type="HOGENOM" id="CLU_111510_0_0_9"/>
<dbReference type="GO" id="GO:0008253">
    <property type="term" value="F:5'-nucleotidase activity"/>
    <property type="evidence" value="ECO:0007669"/>
    <property type="project" value="InterPro"/>
</dbReference>
<dbReference type="GO" id="GO:0046872">
    <property type="term" value="F:metal ion binding"/>
    <property type="evidence" value="ECO:0007669"/>
    <property type="project" value="UniProtKB-KW"/>
</dbReference>
<dbReference type="GO" id="GO:0009223">
    <property type="term" value="P:pyrimidine deoxyribonucleotide catabolic process"/>
    <property type="evidence" value="ECO:0007669"/>
    <property type="project" value="TreeGrafter"/>
</dbReference>
<dbReference type="Gene3D" id="1.10.40.40">
    <property type="entry name" value="Deoxyribonucleotidase, domain 2"/>
    <property type="match status" value="1"/>
</dbReference>
<dbReference type="Gene3D" id="3.40.50.1000">
    <property type="entry name" value="HAD superfamily/HAD-like"/>
    <property type="match status" value="1"/>
</dbReference>
<dbReference type="InterPro" id="IPR010708">
    <property type="entry name" value="5'(3')-deoxyribonucleotidase"/>
</dbReference>
<dbReference type="InterPro" id="IPR036412">
    <property type="entry name" value="HAD-like_sf"/>
</dbReference>
<dbReference type="InterPro" id="IPR023214">
    <property type="entry name" value="HAD_sf"/>
</dbReference>
<dbReference type="PANTHER" id="PTHR16504">
    <property type="entry name" value="5'(3')-DEOXYRIBONUCLEOTIDASE"/>
    <property type="match status" value="1"/>
</dbReference>
<dbReference type="PANTHER" id="PTHR16504:SF4">
    <property type="entry name" value="5'(3')-DEOXYRIBONUCLEOTIDASE"/>
    <property type="match status" value="1"/>
</dbReference>
<dbReference type="Pfam" id="PF06941">
    <property type="entry name" value="NT5C"/>
    <property type="match status" value="1"/>
</dbReference>
<dbReference type="SFLD" id="SFLDG01146">
    <property type="entry name" value="C1.2.2"/>
    <property type="match status" value="1"/>
</dbReference>
<dbReference type="SFLD" id="SFLDS00003">
    <property type="entry name" value="Haloacid_Dehalogenase"/>
    <property type="match status" value="1"/>
</dbReference>
<dbReference type="SUPFAM" id="SSF56784">
    <property type="entry name" value="HAD-like"/>
    <property type="match status" value="1"/>
</dbReference>
<protein>
    <recommendedName>
        <fullName>Putative 5'(3')-deoxyribonucleotidase</fullName>
        <ecNumber>3.1.3.-</ecNumber>
    </recommendedName>
</protein>
<comment type="function">
    <text evidence="3">Dephosphorylates the 5' and 2'(3')-phosphates of deoxyribonucleotides.</text>
</comment>
<comment type="cofactor">
    <cofactor evidence="2">
        <name>Mg(2+)</name>
        <dbReference type="ChEBI" id="CHEBI:18420"/>
    </cofactor>
</comment>
<comment type="similarity">
    <text evidence="3">Belongs to the 5'(3')-deoxyribonucleotidase family.</text>
</comment>
<name>53DR_STAAW</name>
<sequence length="180" mass="20987">MTRKSIAIDMDEVLADTLGEIIDAVNFRADLGIKMEALNGQKLKHVIPEHDGLITEVLREPGFFRHLKVMPYAQEVVKKLTEHYDVYIATAAMDVPTSFSDKYEWLLEFFPFLDPQHFVFCGRKNIVKADYLIDDNPRQLEIFTGTPIMFTAVHNINDDRFERVNSWKDVEQYFLDNIEK</sequence>
<accession>Q8NXN2</accession>
<proteinExistence type="inferred from homology"/>
<keyword id="KW-0378">Hydrolase</keyword>
<keyword id="KW-0460">Magnesium</keyword>
<keyword id="KW-0479">Metal-binding</keyword>
<reference key="1">
    <citation type="journal article" date="2002" name="Lancet">
        <title>Genome and virulence determinants of high virulence community-acquired MRSA.</title>
        <authorList>
            <person name="Baba T."/>
            <person name="Takeuchi F."/>
            <person name="Kuroda M."/>
            <person name="Yuzawa H."/>
            <person name="Aoki K."/>
            <person name="Oguchi A."/>
            <person name="Nagai Y."/>
            <person name="Iwama N."/>
            <person name="Asano K."/>
            <person name="Naimi T."/>
            <person name="Kuroda H."/>
            <person name="Cui L."/>
            <person name="Yamamoto K."/>
            <person name="Hiramatsu K."/>
        </authorList>
    </citation>
    <scope>NUCLEOTIDE SEQUENCE [LARGE SCALE GENOMIC DNA]</scope>
    <source>
        <strain>MW2</strain>
    </source>
</reference>
<organism>
    <name type="scientific">Staphylococcus aureus (strain MW2)</name>
    <dbReference type="NCBI Taxonomy" id="196620"/>
    <lineage>
        <taxon>Bacteria</taxon>
        <taxon>Bacillati</taxon>
        <taxon>Bacillota</taxon>
        <taxon>Bacilli</taxon>
        <taxon>Bacillales</taxon>
        <taxon>Staphylococcaceae</taxon>
        <taxon>Staphylococcus</taxon>
    </lineage>
</organism>
<evidence type="ECO:0000250" key="1">
    <source>
        <dbReference type="UniProtKB" id="Q8CTG7"/>
    </source>
</evidence>
<evidence type="ECO:0000250" key="2">
    <source>
        <dbReference type="UniProtKB" id="Q97JQ5"/>
    </source>
</evidence>
<evidence type="ECO:0000305" key="3"/>
<feature type="chain" id="PRO_0000164385" description="Putative 5'(3')-deoxyribonucleotidase">
    <location>
        <begin position="1"/>
        <end position="180"/>
    </location>
</feature>
<feature type="active site" description="Nucleophile" evidence="3">
    <location>
        <position position="9"/>
    </location>
</feature>
<feature type="active site" description="Proton donor" evidence="3">
    <location>
        <position position="11"/>
    </location>
</feature>
<feature type="binding site" evidence="1">
    <location>
        <position position="9"/>
    </location>
    <ligand>
        <name>Mg(2+)</name>
        <dbReference type="ChEBI" id="CHEBI:18420"/>
    </ligand>
</feature>
<feature type="binding site" evidence="1">
    <location>
        <position position="11"/>
    </location>
    <ligand>
        <name>Mg(2+)</name>
        <dbReference type="ChEBI" id="CHEBI:18420"/>
    </ligand>
</feature>
<feature type="binding site" evidence="1">
    <location>
        <position position="135"/>
    </location>
    <ligand>
        <name>Mg(2+)</name>
        <dbReference type="ChEBI" id="CHEBI:18420"/>
    </ligand>
</feature>